<reference key="1">
    <citation type="journal article" date="1990" name="Nucleic Acids Res.">
        <title>De novo purine nucleotide biosynthesis: cloning of human and avian cDNAs encoding the trifunctional glycinamide ribonucleotide synthetase-aminoimidazole ribonucleotide synthetase-glycinamide ribonucleotide transformylase by functional complementation in E. coli.</title>
        <authorList>
            <person name="Aimi J."/>
            <person name="Qiu H."/>
            <person name="Williams J."/>
            <person name="Zalkin H."/>
            <person name="Dixon J.E."/>
        </authorList>
    </citation>
    <scope>NUCLEOTIDE SEQUENCE [MRNA]</scope>
    <scope>ALTERNATIVE SPLICING</scope>
</reference>
<reference key="2">
    <citation type="journal article" date="2004" name="Nat. Genet.">
        <title>Complete sequencing and characterization of 21,243 full-length human cDNAs.</title>
        <authorList>
            <person name="Ota T."/>
            <person name="Suzuki Y."/>
            <person name="Nishikawa T."/>
            <person name="Otsuki T."/>
            <person name="Sugiyama T."/>
            <person name="Irie R."/>
            <person name="Wakamatsu A."/>
            <person name="Hayashi K."/>
            <person name="Sato H."/>
            <person name="Nagai K."/>
            <person name="Kimura K."/>
            <person name="Makita H."/>
            <person name="Sekine M."/>
            <person name="Obayashi M."/>
            <person name="Nishi T."/>
            <person name="Shibahara T."/>
            <person name="Tanaka T."/>
            <person name="Ishii S."/>
            <person name="Yamamoto J."/>
            <person name="Saito K."/>
            <person name="Kawai Y."/>
            <person name="Isono Y."/>
            <person name="Nakamura Y."/>
            <person name="Nagahari K."/>
            <person name="Murakami K."/>
            <person name="Yasuda T."/>
            <person name="Iwayanagi T."/>
            <person name="Wagatsuma M."/>
            <person name="Shiratori A."/>
            <person name="Sudo H."/>
            <person name="Hosoiri T."/>
            <person name="Kaku Y."/>
            <person name="Kodaira H."/>
            <person name="Kondo H."/>
            <person name="Sugawara M."/>
            <person name="Takahashi M."/>
            <person name="Kanda K."/>
            <person name="Yokoi T."/>
            <person name="Furuya T."/>
            <person name="Kikkawa E."/>
            <person name="Omura Y."/>
            <person name="Abe K."/>
            <person name="Kamihara K."/>
            <person name="Katsuta N."/>
            <person name="Sato K."/>
            <person name="Tanikawa M."/>
            <person name="Yamazaki M."/>
            <person name="Ninomiya K."/>
            <person name="Ishibashi T."/>
            <person name="Yamashita H."/>
            <person name="Murakawa K."/>
            <person name="Fujimori K."/>
            <person name="Tanai H."/>
            <person name="Kimata M."/>
            <person name="Watanabe M."/>
            <person name="Hiraoka S."/>
            <person name="Chiba Y."/>
            <person name="Ishida S."/>
            <person name="Ono Y."/>
            <person name="Takiguchi S."/>
            <person name="Watanabe S."/>
            <person name="Yosida M."/>
            <person name="Hotuta T."/>
            <person name="Kusano J."/>
            <person name="Kanehori K."/>
            <person name="Takahashi-Fujii A."/>
            <person name="Hara H."/>
            <person name="Tanase T.-O."/>
            <person name="Nomura Y."/>
            <person name="Togiya S."/>
            <person name="Komai F."/>
            <person name="Hara R."/>
            <person name="Takeuchi K."/>
            <person name="Arita M."/>
            <person name="Imose N."/>
            <person name="Musashino K."/>
            <person name="Yuuki H."/>
            <person name="Oshima A."/>
            <person name="Sasaki N."/>
            <person name="Aotsuka S."/>
            <person name="Yoshikawa Y."/>
            <person name="Matsunawa H."/>
            <person name="Ichihara T."/>
            <person name="Shiohata N."/>
            <person name="Sano S."/>
            <person name="Moriya S."/>
            <person name="Momiyama H."/>
            <person name="Satoh N."/>
            <person name="Takami S."/>
            <person name="Terashima Y."/>
            <person name="Suzuki O."/>
            <person name="Nakagawa S."/>
            <person name="Senoh A."/>
            <person name="Mizoguchi H."/>
            <person name="Goto Y."/>
            <person name="Shimizu F."/>
            <person name="Wakebe H."/>
            <person name="Hishigaki H."/>
            <person name="Watanabe T."/>
            <person name="Sugiyama A."/>
            <person name="Takemoto M."/>
            <person name="Kawakami B."/>
            <person name="Yamazaki M."/>
            <person name="Watanabe K."/>
            <person name="Kumagai A."/>
            <person name="Itakura S."/>
            <person name="Fukuzumi Y."/>
            <person name="Fujimori Y."/>
            <person name="Komiyama M."/>
            <person name="Tashiro H."/>
            <person name="Tanigami A."/>
            <person name="Fujiwara T."/>
            <person name="Ono T."/>
            <person name="Yamada K."/>
            <person name="Fujii Y."/>
            <person name="Ozaki K."/>
            <person name="Hirao M."/>
            <person name="Ohmori Y."/>
            <person name="Kawabata A."/>
            <person name="Hikiji T."/>
            <person name="Kobatake N."/>
            <person name="Inagaki H."/>
            <person name="Ikema Y."/>
            <person name="Okamoto S."/>
            <person name="Okitani R."/>
            <person name="Kawakami T."/>
            <person name="Noguchi S."/>
            <person name="Itoh T."/>
            <person name="Shigeta K."/>
            <person name="Senba T."/>
            <person name="Matsumura K."/>
            <person name="Nakajima Y."/>
            <person name="Mizuno T."/>
            <person name="Morinaga M."/>
            <person name="Sasaki M."/>
            <person name="Togashi T."/>
            <person name="Oyama M."/>
            <person name="Hata H."/>
            <person name="Watanabe M."/>
            <person name="Komatsu T."/>
            <person name="Mizushima-Sugano J."/>
            <person name="Satoh T."/>
            <person name="Shirai Y."/>
            <person name="Takahashi Y."/>
            <person name="Nakagawa K."/>
            <person name="Okumura K."/>
            <person name="Nagase T."/>
            <person name="Nomura N."/>
            <person name="Kikuchi H."/>
            <person name="Masuho Y."/>
            <person name="Yamashita R."/>
            <person name="Nakai K."/>
            <person name="Yada T."/>
            <person name="Nakamura Y."/>
            <person name="Ohara O."/>
            <person name="Isogai T."/>
            <person name="Sugano S."/>
        </authorList>
    </citation>
    <scope>NUCLEOTIDE SEQUENCE [LARGE SCALE MRNA] (ISOFORM LONG)</scope>
    <scope>VARIANT ILE-421</scope>
    <source>
        <tissue>Testis</tissue>
        <tissue>Trachea</tissue>
    </source>
</reference>
<reference key="3">
    <citation type="submission" date="2005-09" db="EMBL/GenBank/DDBJ databases">
        <authorList>
            <person name="Mural R.J."/>
            <person name="Istrail S."/>
            <person name="Sutton G.G."/>
            <person name="Florea L."/>
            <person name="Halpern A.L."/>
            <person name="Mobarry C.M."/>
            <person name="Lippert R."/>
            <person name="Walenz B."/>
            <person name="Shatkay H."/>
            <person name="Dew I."/>
            <person name="Miller J.R."/>
            <person name="Flanigan M.J."/>
            <person name="Edwards N.J."/>
            <person name="Bolanos R."/>
            <person name="Fasulo D."/>
            <person name="Halldorsson B.V."/>
            <person name="Hannenhalli S."/>
            <person name="Turner R."/>
            <person name="Yooseph S."/>
            <person name="Lu F."/>
            <person name="Nusskern D.R."/>
            <person name="Shue B.C."/>
            <person name="Zheng X.H."/>
            <person name="Zhong F."/>
            <person name="Delcher A.L."/>
            <person name="Huson D.H."/>
            <person name="Kravitz S.A."/>
            <person name="Mouchard L."/>
            <person name="Reinert K."/>
            <person name="Remington K.A."/>
            <person name="Clark A.G."/>
            <person name="Waterman M.S."/>
            <person name="Eichler E.E."/>
            <person name="Adams M.D."/>
            <person name="Hunkapiller M.W."/>
            <person name="Myers E.W."/>
            <person name="Venter J.C."/>
        </authorList>
    </citation>
    <scope>NUCLEOTIDE SEQUENCE [LARGE SCALE GENOMIC DNA]</scope>
</reference>
<reference key="4">
    <citation type="journal article" date="2004" name="Genome Res.">
        <title>The status, quality, and expansion of the NIH full-length cDNA project: the Mammalian Gene Collection (MGC).</title>
        <authorList>
            <consortium name="The MGC Project Team"/>
        </authorList>
    </citation>
    <scope>NUCLEOTIDE SEQUENCE [LARGE SCALE MRNA] (ISOFORM SHORT)</scope>
    <source>
        <tissue>Brain</tissue>
        <tissue>Testis</tissue>
    </source>
</reference>
<reference key="5">
    <citation type="journal article" date="1997" name="Nucleic Acids Res.">
        <title>Intronic polyadenylation in the human glycinamide ribonucleotide formyltransferase gene.</title>
        <authorList>
            <person name="Kan J.L.C."/>
            <person name="Moran R.G."/>
        </authorList>
    </citation>
    <scope>NUCLEOTIDE SEQUENCE [GENOMIC DNA] OF 357-432</scope>
    <scope>VARIANT ILE-421</scope>
</reference>
<reference key="6">
    <citation type="journal article" date="1990" name="Proc. Natl. Acad. Sci. U.S.A.">
        <title>Cloning of three human multifunctional de novo purine biosynthetic genes by functional complementation of yeast mutations.</title>
        <authorList>
            <person name="Schild D."/>
            <person name="Brake A.J."/>
            <person name="Kiefer M.C."/>
            <person name="Young D."/>
            <person name="Barr P.J."/>
        </authorList>
    </citation>
    <scope>NUCLEOTIDE SEQUENCE [MRNA] OF 709-1010</scope>
    <scope>FUNCTION</scope>
    <scope>CATALYTIC ACTIVITY</scope>
    <scope>PATHWAY</scope>
    <scope>DOMAIN</scope>
</reference>
<reference key="7">
    <citation type="journal article" date="2003" name="Nature">
        <title>Proteomic characterization of the human centrosome by protein correlation profiling.</title>
        <authorList>
            <person name="Andersen J.S."/>
            <person name="Wilkinson C.J."/>
            <person name="Mayor T."/>
            <person name="Mortensen P."/>
            <person name="Nigg E.A."/>
            <person name="Mann M."/>
        </authorList>
    </citation>
    <scope>IDENTIFICATION BY MASS SPECTROMETRY</scope>
    <source>
        <tissue>Lymphoblast</tissue>
    </source>
</reference>
<reference key="8">
    <citation type="journal article" date="2005" name="Nat. Biotechnol.">
        <title>Immunoaffinity profiling of tyrosine phosphorylation in cancer cells.</title>
        <authorList>
            <person name="Rush J."/>
            <person name="Moritz A."/>
            <person name="Lee K.A."/>
            <person name="Guo A."/>
            <person name="Goss V.L."/>
            <person name="Spek E.J."/>
            <person name="Zhang H."/>
            <person name="Zha X.-M."/>
            <person name="Polakiewicz R.D."/>
            <person name="Comb M.J."/>
        </authorList>
    </citation>
    <scope>IDENTIFICATION BY MASS SPECTROMETRY [LARGE SCALE ANALYSIS]</scope>
</reference>
<reference key="9">
    <citation type="journal article" date="2009" name="Anal. Chem.">
        <title>Lys-N and trypsin cover complementary parts of the phosphoproteome in a refined SCX-based approach.</title>
        <authorList>
            <person name="Gauci S."/>
            <person name="Helbig A.O."/>
            <person name="Slijper M."/>
            <person name="Krijgsveld J."/>
            <person name="Heck A.J."/>
            <person name="Mohammed S."/>
        </authorList>
    </citation>
    <scope>ACETYLATION [LARGE SCALE ANALYSIS] AT ALA-2</scope>
    <scope>CLEAVAGE OF INITIATOR METHIONINE [LARGE SCALE ANALYSIS]</scope>
    <scope>IDENTIFICATION BY MASS SPECTROMETRY [LARGE SCALE ANALYSIS]</scope>
</reference>
<reference key="10">
    <citation type="journal article" date="2009" name="Science">
        <title>Lysine acetylation targets protein complexes and co-regulates major cellular functions.</title>
        <authorList>
            <person name="Choudhary C."/>
            <person name="Kumar C."/>
            <person name="Gnad F."/>
            <person name="Nielsen M.L."/>
            <person name="Rehman M."/>
            <person name="Walther T.C."/>
            <person name="Olsen J.V."/>
            <person name="Mann M."/>
        </authorList>
    </citation>
    <scope>ACETYLATION [LARGE SCALE ANALYSIS] AT LYS-350</scope>
    <scope>IDENTIFICATION BY MASS SPECTROMETRY [LARGE SCALE ANALYSIS]</scope>
</reference>
<reference key="11">
    <citation type="journal article" date="2011" name="BMC Syst. Biol.">
        <title>Initial characterization of the human central proteome.</title>
        <authorList>
            <person name="Burkard T.R."/>
            <person name="Planyavsky M."/>
            <person name="Kaupe I."/>
            <person name="Breitwieser F.P."/>
            <person name="Buerckstuemmer T."/>
            <person name="Bennett K.L."/>
            <person name="Superti-Furga G."/>
            <person name="Colinge J."/>
        </authorList>
    </citation>
    <scope>IDENTIFICATION BY MASS SPECTROMETRY [LARGE SCALE ANALYSIS]</scope>
</reference>
<reference key="12">
    <citation type="journal article" date="2013" name="J. Proteome Res.">
        <title>Toward a comprehensive characterization of a human cancer cell phosphoproteome.</title>
        <authorList>
            <person name="Zhou H."/>
            <person name="Di Palma S."/>
            <person name="Preisinger C."/>
            <person name="Peng M."/>
            <person name="Polat A.N."/>
            <person name="Heck A.J."/>
            <person name="Mohammed S."/>
        </authorList>
    </citation>
    <scope>PHOSPHORYLATION [LARGE SCALE ANALYSIS] AT SER-10; SER-440; THR-682; SER-796 AND SER-802</scope>
    <scope>IDENTIFICATION BY MASS SPECTROMETRY [LARGE SCALE ANALYSIS]</scope>
    <source>
        <tissue>Cervix carcinoma</tissue>
        <tissue>Erythroleukemia</tissue>
    </source>
</reference>
<reference key="13">
    <citation type="journal article" date="2014" name="J. Proteomics">
        <title>An enzyme assisted RP-RPLC approach for in-depth analysis of human liver phosphoproteome.</title>
        <authorList>
            <person name="Bian Y."/>
            <person name="Song C."/>
            <person name="Cheng K."/>
            <person name="Dong M."/>
            <person name="Wang F."/>
            <person name="Huang J."/>
            <person name="Sun D."/>
            <person name="Wang L."/>
            <person name="Ye M."/>
            <person name="Zou H."/>
        </authorList>
    </citation>
    <scope>IDENTIFICATION BY MASS SPECTROMETRY [LARGE SCALE ANALYSIS]</scope>
    <source>
        <tissue>Liver</tissue>
    </source>
</reference>
<reference evidence="20 21 22" key="14">
    <citation type="journal article" date="2002" name="Biochemistry">
        <title>Crystal structures of human GAR Tfase at low and high pH and with substrate beta-GAR.</title>
        <authorList>
            <person name="Zhang Y."/>
            <person name="Desharnais J."/>
            <person name="Greasley S.E."/>
            <person name="Beardsley G.P."/>
            <person name="Boger D.L."/>
            <person name="Wilson I.A."/>
        </authorList>
    </citation>
    <scope>X-RAY CRYSTALLOGRAPHY (1.72 ANGSTROMS) OF 808-1010 IN COMPLEX WITH N(1)-(5-PHOSPHO-BETA-D-RIBOSYL)GLYCINAMIDE</scope>
    <scope>FUNCTION</scope>
    <scope>CATALYTIC ACTIVITY</scope>
    <scope>PATHWAY</scope>
    <scope>DOMAIN</scope>
    <scope>REGION</scope>
</reference>
<reference evidence="23" key="15">
    <citation type="journal article" date="2003" name="Biochemistry">
        <title>Rational design, synthesis, evaluation, and crystal structure of a potent inhibitor of human GAR Tfase: 10-(trifluoroacetyl)-5,10-dideazaacyclic-5,6,7,8-tetrahydrofolic acid.</title>
        <authorList>
            <person name="Zhang Y."/>
            <person name="Desharnais J."/>
            <person name="Marsilje T.H."/>
            <person name="Li C."/>
            <person name="Hedrick M.P."/>
            <person name="Gooljarsingh L.T."/>
            <person name="Tavassoli A."/>
            <person name="Benkovic S.J."/>
            <person name="Olson A.J."/>
            <person name="Boger D.L."/>
            <person name="Wilson I.A."/>
        </authorList>
    </citation>
    <scope>X-RAY CRYSTALLOGRAPHY (1.98 ANGSTROMS) OF 808-1010 IN COMPLEX WITH FORMYLTETRAHYDROFOLATE ANALOG</scope>
    <scope>FUNCTION</scope>
    <scope>CATALYTIC ACTIVITY</scope>
    <scope>DOMAIN</scope>
    <scope>REGION</scope>
</reference>
<reference evidence="24 25" key="16">
    <citation type="journal article" date="2005" name="Biochemistry">
        <title>The apo and ternary complex structures of a chemotherapeutic target: human glycinamide ribonucleotide transformylase.</title>
        <authorList>
            <person name="Dahms T.E."/>
            <person name="Sainz G."/>
            <person name="Giroux E.L."/>
            <person name="Caperelli C.A."/>
            <person name="Smith J.L."/>
        </authorList>
    </citation>
    <scope>X-RAY CRYSTALLOGRAPHY (2.07 ANGSTROMS) OF 808-1010 IN COMPLEX WITH SUBSTRATE ANALOGS</scope>
    <scope>REGION</scope>
</reference>
<reference evidence="26 27" key="17">
    <citation type="journal article" date="2010" name="Nucleic Acids Res.">
        <title>Structural studies of tri-functional human GART.</title>
        <authorList>
            <person name="Welin M."/>
            <person name="Grossmann J.G."/>
            <person name="Flodin S."/>
            <person name="Nyman T."/>
            <person name="Stenmark P."/>
            <person name="Tresaugues L."/>
            <person name="Kotenyova T."/>
            <person name="Johansson I."/>
            <person name="Nordlund P."/>
            <person name="Lehtio L."/>
        </authorList>
    </citation>
    <scope>X-RAY CRYSTALLOGRAPHY (2.10 ANGSTROMS) OF 1-430 AND 467-794 IN COMPLEX WITH ATP</scope>
    <scope>FUNCTION</scope>
    <scope>CATALYTIC ACTIVITY</scope>
    <scope>SUBUNIT</scope>
    <scope>DOMAIN</scope>
    <scope>REGION</scope>
</reference>
<dbReference type="EC" id="6.3.4.13" evidence="18 19"/>
<dbReference type="EC" id="6.3.3.1" evidence="18 19"/>
<dbReference type="EC" id="2.1.2.2" evidence="5 6 18 19"/>
<dbReference type="EMBL" id="X54199">
    <property type="protein sequence ID" value="CAA38119.1"/>
    <property type="molecule type" value="mRNA"/>
</dbReference>
<dbReference type="EMBL" id="AK292560">
    <property type="protein sequence ID" value="BAF85249.1"/>
    <property type="molecule type" value="mRNA"/>
</dbReference>
<dbReference type="EMBL" id="AK292897">
    <property type="protein sequence ID" value="BAF85586.1"/>
    <property type="molecule type" value="mRNA"/>
</dbReference>
<dbReference type="EMBL" id="CH471079">
    <property type="protein sequence ID" value="EAX09826.1"/>
    <property type="molecule type" value="Genomic_DNA"/>
</dbReference>
<dbReference type="EMBL" id="CH471079">
    <property type="protein sequence ID" value="EAX09827.1"/>
    <property type="molecule type" value="Genomic_DNA"/>
</dbReference>
<dbReference type="EMBL" id="CH471079">
    <property type="protein sequence ID" value="EAX09828.1"/>
    <property type="molecule type" value="Genomic_DNA"/>
</dbReference>
<dbReference type="EMBL" id="CH471079">
    <property type="protein sequence ID" value="EAX09829.1"/>
    <property type="molecule type" value="Genomic_DNA"/>
</dbReference>
<dbReference type="EMBL" id="BC038958">
    <property type="protein sequence ID" value="AAH38958.1"/>
    <property type="molecule type" value="mRNA"/>
</dbReference>
<dbReference type="EMBL" id="BC093641">
    <property type="protein sequence ID" value="AAH93641.1"/>
    <property type="molecule type" value="mRNA"/>
</dbReference>
<dbReference type="EMBL" id="BC101565">
    <property type="protein sequence ID" value="AAI01566.1"/>
    <property type="molecule type" value="mRNA"/>
</dbReference>
<dbReference type="EMBL" id="AF008653">
    <property type="protein sequence ID" value="AAB70812.1"/>
    <property type="molecule type" value="Genomic_DNA"/>
</dbReference>
<dbReference type="EMBL" id="M32082">
    <property type="protein sequence ID" value="AAA60077.1"/>
    <property type="molecule type" value="mRNA"/>
</dbReference>
<dbReference type="CCDS" id="CCDS13627.1">
    <molecule id="P22102-1"/>
</dbReference>
<dbReference type="CCDS" id="CCDS13628.1">
    <molecule id="P22102-2"/>
</dbReference>
<dbReference type="PIR" id="S12616">
    <property type="entry name" value="AJHUPR"/>
</dbReference>
<dbReference type="RefSeq" id="NP_000810.1">
    <molecule id="P22102-1"/>
    <property type="nucleotide sequence ID" value="NM_000819.5"/>
</dbReference>
<dbReference type="RefSeq" id="NP_001129477.1">
    <molecule id="P22102-1"/>
    <property type="nucleotide sequence ID" value="NM_001136005.1"/>
</dbReference>
<dbReference type="RefSeq" id="NP_001129478.1">
    <molecule id="P22102-1"/>
    <property type="nucleotide sequence ID" value="NM_001136006.1"/>
</dbReference>
<dbReference type="RefSeq" id="NP_780294.1">
    <molecule id="P22102-2"/>
    <property type="nucleotide sequence ID" value="NM_175085.3"/>
</dbReference>
<dbReference type="RefSeq" id="XP_005260998.1">
    <molecule id="P22102-1"/>
    <property type="nucleotide sequence ID" value="XM_005260941.3"/>
</dbReference>
<dbReference type="RefSeq" id="XP_006724052.1">
    <molecule id="P22102-1"/>
    <property type="nucleotide sequence ID" value="XM_006723989.3"/>
</dbReference>
<dbReference type="RefSeq" id="XP_006724053.1">
    <molecule id="P22102-1"/>
    <property type="nucleotide sequence ID" value="XM_006723990.3"/>
</dbReference>
<dbReference type="RefSeq" id="XP_011527828.1">
    <molecule id="P22102-1"/>
    <property type="nucleotide sequence ID" value="XM_011529526.3"/>
</dbReference>
<dbReference type="RefSeq" id="XP_047296699.1">
    <molecule id="P22102-1"/>
    <property type="nucleotide sequence ID" value="XM_047440743.1"/>
</dbReference>
<dbReference type="RefSeq" id="XP_054180407.1">
    <molecule id="P22102-1"/>
    <property type="nucleotide sequence ID" value="XM_054324432.1"/>
</dbReference>
<dbReference type="RefSeq" id="XP_054180408.1">
    <molecule id="P22102-1"/>
    <property type="nucleotide sequence ID" value="XM_054324433.1"/>
</dbReference>
<dbReference type="RefSeq" id="XP_054180409.1">
    <molecule id="P22102-1"/>
    <property type="nucleotide sequence ID" value="XM_054324434.1"/>
</dbReference>
<dbReference type="RefSeq" id="XP_054180410.1">
    <molecule id="P22102-1"/>
    <property type="nucleotide sequence ID" value="XM_054324435.1"/>
</dbReference>
<dbReference type="RefSeq" id="XP_054180411.1">
    <molecule id="P22102-1"/>
    <property type="nucleotide sequence ID" value="XM_054324436.1"/>
</dbReference>
<dbReference type="PDB" id="1MEJ">
    <property type="method" value="X-ray"/>
    <property type="resolution" value="2.00 A"/>
    <property type="chains" value="A/B/C=810-1010"/>
</dbReference>
<dbReference type="PDB" id="1MEN">
    <property type="method" value="X-ray"/>
    <property type="resolution" value="2.23 A"/>
    <property type="chains" value="A/B/C=810-1010"/>
</dbReference>
<dbReference type="PDB" id="1MEO">
    <property type="method" value="X-ray"/>
    <property type="resolution" value="1.72 A"/>
    <property type="chains" value="A=808-1010"/>
</dbReference>
<dbReference type="PDB" id="1NJS">
    <property type="method" value="X-ray"/>
    <property type="resolution" value="1.98 A"/>
    <property type="chains" value="A/B=808-1010"/>
</dbReference>
<dbReference type="PDB" id="1RBM">
    <property type="method" value="X-ray"/>
    <property type="resolution" value="2.30 A"/>
    <property type="chains" value="A/B=808-1010"/>
</dbReference>
<dbReference type="PDB" id="1RBQ">
    <property type="method" value="X-ray"/>
    <property type="resolution" value="2.10 A"/>
    <property type="chains" value="A/B/C/D=808-1010"/>
</dbReference>
<dbReference type="PDB" id="1RBY">
    <property type="method" value="X-ray"/>
    <property type="resolution" value="2.10 A"/>
    <property type="chains" value="A/B/C/D=808-1010"/>
</dbReference>
<dbReference type="PDB" id="1RBZ">
    <property type="method" value="X-ray"/>
    <property type="resolution" value="2.10 A"/>
    <property type="chains" value="A/B=808-1010"/>
</dbReference>
<dbReference type="PDB" id="1RC0">
    <property type="method" value="X-ray"/>
    <property type="resolution" value="2.05 A"/>
    <property type="chains" value="A/B=808-1010"/>
</dbReference>
<dbReference type="PDB" id="1RC1">
    <property type="method" value="X-ray"/>
    <property type="resolution" value="2.25 A"/>
    <property type="chains" value="A/B=808-1010"/>
</dbReference>
<dbReference type="PDB" id="1ZLX">
    <property type="method" value="X-ray"/>
    <property type="resolution" value="2.20 A"/>
    <property type="chains" value="A=808-1010"/>
</dbReference>
<dbReference type="PDB" id="1ZLY">
    <property type="method" value="X-ray"/>
    <property type="resolution" value="2.07 A"/>
    <property type="chains" value="A=808-1010"/>
</dbReference>
<dbReference type="PDB" id="2QK4">
    <property type="method" value="X-ray"/>
    <property type="resolution" value="2.45 A"/>
    <property type="chains" value="A/B=1-430"/>
</dbReference>
<dbReference type="PDB" id="2V9Y">
    <property type="method" value="X-ray"/>
    <property type="resolution" value="2.10 A"/>
    <property type="chains" value="A/B=467-794"/>
</dbReference>
<dbReference type="PDB" id="4EW1">
    <property type="method" value="X-ray"/>
    <property type="resolution" value="1.52 A"/>
    <property type="chains" value="A=810-1010"/>
</dbReference>
<dbReference type="PDB" id="4EW2">
    <property type="method" value="X-ray"/>
    <property type="resolution" value="1.60 A"/>
    <property type="chains" value="A=808-1010"/>
</dbReference>
<dbReference type="PDB" id="4EW3">
    <property type="method" value="X-ray"/>
    <property type="resolution" value="1.70 A"/>
    <property type="chains" value="A=808-1010"/>
</dbReference>
<dbReference type="PDB" id="4ZYT">
    <property type="method" value="X-ray"/>
    <property type="resolution" value="1.70 A"/>
    <property type="chains" value="A=808-1010"/>
</dbReference>
<dbReference type="PDB" id="4ZYU">
    <property type="method" value="X-ray"/>
    <property type="resolution" value="1.95 A"/>
    <property type="chains" value="A=808-1010"/>
</dbReference>
<dbReference type="PDB" id="4ZYV">
    <property type="method" value="X-ray"/>
    <property type="resolution" value="2.05 A"/>
    <property type="chains" value="A=808-1010"/>
</dbReference>
<dbReference type="PDB" id="4ZYW">
    <property type="method" value="X-ray"/>
    <property type="resolution" value="2.05 A"/>
    <property type="chains" value="A=808-1010"/>
</dbReference>
<dbReference type="PDB" id="4ZYX">
    <property type="method" value="X-ray"/>
    <property type="resolution" value="1.65 A"/>
    <property type="chains" value="A=808-1010"/>
</dbReference>
<dbReference type="PDB" id="4ZYY">
    <property type="method" value="X-ray"/>
    <property type="resolution" value="1.85 A"/>
    <property type="chains" value="A=808-1010"/>
</dbReference>
<dbReference type="PDB" id="4ZYZ">
    <property type="method" value="X-ray"/>
    <property type="resolution" value="1.60 A"/>
    <property type="chains" value="A=808-1010"/>
</dbReference>
<dbReference type="PDB" id="4ZZ0">
    <property type="method" value="X-ray"/>
    <property type="resolution" value="1.65 A"/>
    <property type="chains" value="A=808-1010"/>
</dbReference>
<dbReference type="PDB" id="4ZZ1">
    <property type="method" value="X-ray"/>
    <property type="resolution" value="1.35 A"/>
    <property type="chains" value="A=808-1010"/>
</dbReference>
<dbReference type="PDB" id="4ZZ2">
    <property type="method" value="X-ray"/>
    <property type="resolution" value="1.45 A"/>
    <property type="chains" value="A=808-1010"/>
</dbReference>
<dbReference type="PDB" id="4ZZ3">
    <property type="method" value="X-ray"/>
    <property type="resolution" value="2.50 A"/>
    <property type="chains" value="A=808-1010"/>
</dbReference>
<dbReference type="PDB" id="5J9F">
    <property type="method" value="X-ray"/>
    <property type="resolution" value="2.10 A"/>
    <property type="chains" value="A=808-1010"/>
</dbReference>
<dbReference type="PDB" id="7JG0">
    <property type="method" value="X-ray"/>
    <property type="resolution" value="1.98 A"/>
    <property type="chains" value="A=808-1010"/>
</dbReference>
<dbReference type="PDB" id="7JG3">
    <property type="method" value="X-ray"/>
    <property type="resolution" value="2.09 A"/>
    <property type="chains" value="A=808-1010"/>
</dbReference>
<dbReference type="PDB" id="7JG4">
    <property type="method" value="X-ray"/>
    <property type="resolution" value="2.46 A"/>
    <property type="chains" value="A=808-1010"/>
</dbReference>
<dbReference type="PDB" id="8FDX">
    <property type="method" value="X-ray"/>
    <property type="resolution" value="2.07 A"/>
    <property type="chains" value="A=808-1010"/>
</dbReference>
<dbReference type="PDB" id="8FDY">
    <property type="method" value="X-ray"/>
    <property type="resolution" value="2.06 A"/>
    <property type="chains" value="A=808-1010"/>
</dbReference>
<dbReference type="PDB" id="8FE0">
    <property type="method" value="X-ray"/>
    <property type="resolution" value="2.22 A"/>
    <property type="chains" value="A=808-1010"/>
</dbReference>
<dbReference type="PDB" id="8FJV">
    <property type="method" value="X-ray"/>
    <property type="resolution" value="2.69 A"/>
    <property type="chains" value="A=808-1010"/>
</dbReference>
<dbReference type="PDB" id="8FJW">
    <property type="method" value="X-ray"/>
    <property type="resolution" value="2.08 A"/>
    <property type="chains" value="A=808-1010"/>
</dbReference>
<dbReference type="PDB" id="8FJX">
    <property type="method" value="X-ray"/>
    <property type="resolution" value="2.17 A"/>
    <property type="chains" value="A=808-1010"/>
</dbReference>
<dbReference type="PDB" id="8FJY">
    <property type="method" value="X-ray"/>
    <property type="resolution" value="2.98 A"/>
    <property type="chains" value="A=808-1010"/>
</dbReference>
<dbReference type="PDB" id="9NX6">
    <property type="method" value="X-ray"/>
    <property type="resolution" value="2.48 A"/>
    <property type="chains" value="A=808-1010"/>
</dbReference>
<dbReference type="PDBsum" id="1MEJ"/>
<dbReference type="PDBsum" id="1MEN"/>
<dbReference type="PDBsum" id="1MEO"/>
<dbReference type="PDBsum" id="1NJS"/>
<dbReference type="PDBsum" id="1RBM"/>
<dbReference type="PDBsum" id="1RBQ"/>
<dbReference type="PDBsum" id="1RBY"/>
<dbReference type="PDBsum" id="1RBZ"/>
<dbReference type="PDBsum" id="1RC0"/>
<dbReference type="PDBsum" id="1RC1"/>
<dbReference type="PDBsum" id="1ZLX"/>
<dbReference type="PDBsum" id="1ZLY"/>
<dbReference type="PDBsum" id="2QK4"/>
<dbReference type="PDBsum" id="2V9Y"/>
<dbReference type="PDBsum" id="4EW1"/>
<dbReference type="PDBsum" id="4EW2"/>
<dbReference type="PDBsum" id="4EW3"/>
<dbReference type="PDBsum" id="4ZYT"/>
<dbReference type="PDBsum" id="4ZYU"/>
<dbReference type="PDBsum" id="4ZYV"/>
<dbReference type="PDBsum" id="4ZYW"/>
<dbReference type="PDBsum" id="4ZYX"/>
<dbReference type="PDBsum" id="4ZYY"/>
<dbReference type="PDBsum" id="4ZYZ"/>
<dbReference type="PDBsum" id="4ZZ0"/>
<dbReference type="PDBsum" id="4ZZ1"/>
<dbReference type="PDBsum" id="4ZZ2"/>
<dbReference type="PDBsum" id="4ZZ3"/>
<dbReference type="PDBsum" id="5J9F"/>
<dbReference type="PDBsum" id="7JG0"/>
<dbReference type="PDBsum" id="7JG3"/>
<dbReference type="PDBsum" id="7JG4"/>
<dbReference type="PDBsum" id="8FDX"/>
<dbReference type="PDBsum" id="8FDY"/>
<dbReference type="PDBsum" id="8FE0"/>
<dbReference type="PDBsum" id="8FJV"/>
<dbReference type="PDBsum" id="8FJW"/>
<dbReference type="PDBsum" id="8FJX"/>
<dbReference type="PDBsum" id="8FJY"/>
<dbReference type="PDBsum" id="9NX6"/>
<dbReference type="SMR" id="P22102"/>
<dbReference type="BioGRID" id="108888">
    <property type="interactions" value="252"/>
</dbReference>
<dbReference type="CORUM" id="P22102"/>
<dbReference type="FunCoup" id="P22102">
    <property type="interactions" value="2376"/>
</dbReference>
<dbReference type="IntAct" id="P22102">
    <property type="interactions" value="59"/>
</dbReference>
<dbReference type="MINT" id="P22102"/>
<dbReference type="STRING" id="9606.ENSP00000371253"/>
<dbReference type="BindingDB" id="P22102"/>
<dbReference type="ChEMBL" id="CHEMBL3972"/>
<dbReference type="DrugBank" id="DB04264">
    <property type="generic name" value="(10R)-10-formyl-5,8,10-trideazafolic acid"/>
</dbReference>
<dbReference type="DrugBank" id="DB02540">
    <property type="generic name" value="10-formyl-5,8,10-trideazafolic acid"/>
</dbReference>
<dbReference type="DrugBank" id="DB02236">
    <property type="generic name" value="Glycinamide Ribonucleotide"/>
</dbReference>
<dbReference type="DrugBank" id="DB03546">
    <property type="generic name" value="N-({4-[(1R)-4-[(2R,4S,5S)-2,4-diamino-6-oxohexahydropyrimidin-5-yl]-1-(2,2,2-trifluoro-1,1-dihydroxyethyl)butyl]phenyl}carbonyl)-L-glutamic acid"/>
</dbReference>
<dbReference type="DrugBank" id="DB12757">
    <property type="generic name" value="Pelitrexol"/>
</dbReference>
<dbReference type="DrugBank" id="DB00642">
    <property type="generic name" value="Pemetrexed"/>
</dbReference>
<dbReference type="DrugCentral" id="P22102"/>
<dbReference type="GlyGen" id="P22102">
    <property type="glycosylation" value="1 site, 1 O-linked glycan (1 site)"/>
</dbReference>
<dbReference type="iPTMnet" id="P22102"/>
<dbReference type="MetOSite" id="P22102"/>
<dbReference type="PhosphoSitePlus" id="P22102"/>
<dbReference type="SwissPalm" id="P22102"/>
<dbReference type="BioMuta" id="GART"/>
<dbReference type="DMDM" id="131616"/>
<dbReference type="jPOST" id="P22102"/>
<dbReference type="MassIVE" id="P22102"/>
<dbReference type="PaxDb" id="9606-ENSP00000371253"/>
<dbReference type="PeptideAtlas" id="P22102"/>
<dbReference type="ProteomicsDB" id="53961">
    <molecule id="P22102-1"/>
</dbReference>
<dbReference type="ProteomicsDB" id="53962">
    <molecule id="P22102-2"/>
</dbReference>
<dbReference type="Pumba" id="P22102"/>
<dbReference type="Antibodypedia" id="1063">
    <property type="antibodies" value="215 antibodies from 31 providers"/>
</dbReference>
<dbReference type="DNASU" id="2618"/>
<dbReference type="Ensembl" id="ENST00000361093.9">
    <molecule id="P22102-2"/>
    <property type="protein sequence ID" value="ENSP00000354388.5"/>
    <property type="gene ID" value="ENSG00000159131.17"/>
</dbReference>
<dbReference type="Ensembl" id="ENST00000381815.9">
    <molecule id="P22102-1"/>
    <property type="protein sequence ID" value="ENSP00000371236.4"/>
    <property type="gene ID" value="ENSG00000159131.17"/>
</dbReference>
<dbReference type="Ensembl" id="ENST00000381831.7">
    <molecule id="P22102-1"/>
    <property type="protein sequence ID" value="ENSP00000371253.3"/>
    <property type="gene ID" value="ENSG00000159131.17"/>
</dbReference>
<dbReference type="Ensembl" id="ENST00000381839.7">
    <molecule id="P22102-1"/>
    <property type="protein sequence ID" value="ENSP00000371261.3"/>
    <property type="gene ID" value="ENSG00000159131.17"/>
</dbReference>
<dbReference type="Ensembl" id="ENST00000571089.2">
    <property type="protein sequence ID" value="ENSP00000459532.2"/>
    <property type="gene ID" value="ENSG00000262473.5"/>
</dbReference>
<dbReference type="Ensembl" id="ENST00000573055.5">
    <property type="protein sequence ID" value="ENSP00000459391.2"/>
    <property type="gene ID" value="ENSG00000262473.5"/>
</dbReference>
<dbReference type="Ensembl" id="ENST00000575273.5">
    <property type="protein sequence ID" value="ENSP00000461700.2"/>
    <property type="gene ID" value="ENSG00000262473.5"/>
</dbReference>
<dbReference type="GeneID" id="2618"/>
<dbReference type="KEGG" id="hsa:2618"/>
<dbReference type="MANE-Select" id="ENST00000381815.9">
    <property type="protein sequence ID" value="ENSP00000371236.4"/>
    <property type="RefSeq nucleotide sequence ID" value="NM_000819.5"/>
    <property type="RefSeq protein sequence ID" value="NP_000810.1"/>
</dbReference>
<dbReference type="UCSC" id="uc002yrx.4">
    <molecule id="P22102-1"/>
    <property type="organism name" value="human"/>
</dbReference>
<dbReference type="AGR" id="HGNC:4163"/>
<dbReference type="CTD" id="2618"/>
<dbReference type="DisGeNET" id="2618"/>
<dbReference type="GeneCards" id="GART"/>
<dbReference type="HGNC" id="HGNC:4163">
    <property type="gene designation" value="GART"/>
</dbReference>
<dbReference type="HPA" id="ENSG00000159131">
    <property type="expression patterns" value="Low tissue specificity"/>
</dbReference>
<dbReference type="MIM" id="138440">
    <property type="type" value="gene"/>
</dbReference>
<dbReference type="neXtProt" id="NX_P22102"/>
<dbReference type="OpenTargets" id="ENSG00000159131"/>
<dbReference type="PharmGKB" id="PA28576"/>
<dbReference type="VEuPathDB" id="HostDB:ENSG00000159131"/>
<dbReference type="eggNOG" id="KOG0237">
    <property type="taxonomic scope" value="Eukaryota"/>
</dbReference>
<dbReference type="eggNOG" id="KOG3076">
    <property type="taxonomic scope" value="Eukaryota"/>
</dbReference>
<dbReference type="GeneTree" id="ENSGT00390000000292"/>
<dbReference type="HOGENOM" id="CLU_005361_0_2_1"/>
<dbReference type="InParanoid" id="P22102"/>
<dbReference type="OMA" id="EVMQACC"/>
<dbReference type="OrthoDB" id="2018833at2759"/>
<dbReference type="PAN-GO" id="P22102">
    <property type="GO annotations" value="5 GO annotations based on evolutionary models"/>
</dbReference>
<dbReference type="PhylomeDB" id="P22102"/>
<dbReference type="TreeFam" id="TF106368"/>
<dbReference type="BioCyc" id="MetaCyc:HS08358-MONOMER"/>
<dbReference type="BRENDA" id="2.1.2.2">
    <property type="organism ID" value="2681"/>
</dbReference>
<dbReference type="BRENDA" id="6.3.4.13">
    <property type="organism ID" value="2681"/>
</dbReference>
<dbReference type="PathwayCommons" id="P22102"/>
<dbReference type="Reactome" id="R-HSA-73817">
    <property type="pathway name" value="Purine ribonucleoside monophosphate biosynthesis"/>
</dbReference>
<dbReference type="SignaLink" id="P22102"/>
<dbReference type="SIGNOR" id="P22102"/>
<dbReference type="UniPathway" id="UPA00074">
    <property type="reaction ID" value="UER00125"/>
</dbReference>
<dbReference type="UniPathway" id="UPA00074">
    <property type="reaction ID" value="UER00126"/>
</dbReference>
<dbReference type="UniPathway" id="UPA00074">
    <property type="reaction ID" value="UER00129"/>
</dbReference>
<dbReference type="BioGRID-ORCS" id="2618">
    <property type="hits" value="201 hits in 1178 CRISPR screens"/>
</dbReference>
<dbReference type="ChiTaRS" id="GART">
    <property type="organism name" value="human"/>
</dbReference>
<dbReference type="EvolutionaryTrace" id="P22102"/>
<dbReference type="GenomeRNAi" id="2618"/>
<dbReference type="Pharos" id="P22102">
    <property type="development level" value="Tclin"/>
</dbReference>
<dbReference type="PRO" id="PR:P22102"/>
<dbReference type="Proteomes" id="UP000005640">
    <property type="component" value="Chromosome 21"/>
</dbReference>
<dbReference type="RNAct" id="P22102">
    <property type="molecule type" value="protein"/>
</dbReference>
<dbReference type="Bgee" id="ENSG00000159131">
    <property type="expression patterns" value="Expressed in ventricular zone and 182 other cell types or tissues"/>
</dbReference>
<dbReference type="ExpressionAtlas" id="P22102">
    <property type="expression patterns" value="baseline and differential"/>
</dbReference>
<dbReference type="GO" id="GO:0005829">
    <property type="term" value="C:cytosol"/>
    <property type="evidence" value="ECO:0000314"/>
    <property type="project" value="MGI"/>
</dbReference>
<dbReference type="GO" id="GO:0070062">
    <property type="term" value="C:extracellular exosome"/>
    <property type="evidence" value="ECO:0007005"/>
    <property type="project" value="UniProtKB"/>
</dbReference>
<dbReference type="GO" id="GO:0005524">
    <property type="term" value="F:ATP binding"/>
    <property type="evidence" value="ECO:0007669"/>
    <property type="project" value="UniProtKB-KW"/>
</dbReference>
<dbReference type="GO" id="GO:0046872">
    <property type="term" value="F:metal ion binding"/>
    <property type="evidence" value="ECO:0007669"/>
    <property type="project" value="UniProtKB-KW"/>
</dbReference>
<dbReference type="GO" id="GO:0004637">
    <property type="term" value="F:phosphoribosylamine-glycine ligase activity"/>
    <property type="evidence" value="ECO:0000318"/>
    <property type="project" value="GO_Central"/>
</dbReference>
<dbReference type="GO" id="GO:0004641">
    <property type="term" value="F:phosphoribosylformylglycinamidine cyclo-ligase activity"/>
    <property type="evidence" value="ECO:0000314"/>
    <property type="project" value="MGI"/>
</dbReference>
<dbReference type="GO" id="GO:0004644">
    <property type="term" value="F:phosphoribosylglycinamide formyltransferase activity"/>
    <property type="evidence" value="ECO:0000314"/>
    <property type="project" value="MGI"/>
</dbReference>
<dbReference type="GO" id="GO:0044208">
    <property type="term" value="P:'de novo' AMP biosynthetic process"/>
    <property type="evidence" value="ECO:0000314"/>
    <property type="project" value="MGI"/>
</dbReference>
<dbReference type="GO" id="GO:0006189">
    <property type="term" value="P:'de novo' IMP biosynthetic process"/>
    <property type="evidence" value="ECO:0000314"/>
    <property type="project" value="MGI"/>
</dbReference>
<dbReference type="GO" id="GO:0097294">
    <property type="term" value="P:'de novo' XMP biosynthetic process"/>
    <property type="evidence" value="ECO:0000314"/>
    <property type="project" value="MGI"/>
</dbReference>
<dbReference type="GO" id="GO:0046084">
    <property type="term" value="P:adenine biosynthetic process"/>
    <property type="evidence" value="ECO:0000318"/>
    <property type="project" value="GO_Central"/>
</dbReference>
<dbReference type="GO" id="GO:0003360">
    <property type="term" value="P:brainstem development"/>
    <property type="evidence" value="ECO:0007669"/>
    <property type="project" value="Ensembl"/>
</dbReference>
<dbReference type="GO" id="GO:0021549">
    <property type="term" value="P:cerebellum development"/>
    <property type="evidence" value="ECO:0007669"/>
    <property type="project" value="Ensembl"/>
</dbReference>
<dbReference type="GO" id="GO:0021987">
    <property type="term" value="P:cerebral cortex development"/>
    <property type="evidence" value="ECO:0007669"/>
    <property type="project" value="Ensembl"/>
</dbReference>
<dbReference type="GO" id="GO:0006177">
    <property type="term" value="P:GMP biosynthetic process"/>
    <property type="evidence" value="ECO:0000314"/>
    <property type="project" value="MGI"/>
</dbReference>
<dbReference type="GO" id="GO:0006164">
    <property type="term" value="P:purine nucleotide biosynthetic process"/>
    <property type="evidence" value="ECO:0000318"/>
    <property type="project" value="GO_Central"/>
</dbReference>
<dbReference type="GO" id="GO:0009168">
    <property type="term" value="P:purine ribonucleoside monophosphate biosynthetic process"/>
    <property type="evidence" value="ECO:0000304"/>
    <property type="project" value="Reactome"/>
</dbReference>
<dbReference type="CDD" id="cd08645">
    <property type="entry name" value="FMT_core_GART"/>
    <property type="match status" value="1"/>
</dbReference>
<dbReference type="CDD" id="cd02196">
    <property type="entry name" value="PurM"/>
    <property type="match status" value="1"/>
</dbReference>
<dbReference type="FunFam" id="3.40.50.20:FF:000006">
    <property type="entry name" value="Phosphoribosylamine--glycine ligase, chloroplastic"/>
    <property type="match status" value="1"/>
</dbReference>
<dbReference type="FunFam" id="3.30.1490.20:FF:000006">
    <property type="entry name" value="phosphoribosylamine--glycine ligase, chloroplastic-like"/>
    <property type="match status" value="1"/>
</dbReference>
<dbReference type="FunFam" id="3.30.1330.10:FF:000001">
    <property type="entry name" value="Phosphoribosylformylglycinamidine cyclo-ligase"/>
    <property type="match status" value="1"/>
</dbReference>
<dbReference type="FunFam" id="3.30.470.20:FF:000018">
    <property type="entry name" value="Trifunctional purine biosynthetic protein adenosine-3"/>
    <property type="match status" value="1"/>
</dbReference>
<dbReference type="FunFam" id="3.40.50.170:FF:000006">
    <property type="entry name" value="Trifunctional purine biosynthetic protein adenosine-3"/>
    <property type="match status" value="1"/>
</dbReference>
<dbReference type="FunFam" id="3.90.600.10:FF:000001">
    <property type="entry name" value="Trifunctional purine biosynthetic protein adenosine-3"/>
    <property type="match status" value="1"/>
</dbReference>
<dbReference type="FunFam" id="3.90.650.10:FF:000007">
    <property type="entry name" value="Trifunctional purine biosynthetic protein adenosine-3"/>
    <property type="match status" value="1"/>
</dbReference>
<dbReference type="Gene3D" id="3.40.50.20">
    <property type="match status" value="1"/>
</dbReference>
<dbReference type="Gene3D" id="3.30.1490.20">
    <property type="entry name" value="ATP-grasp fold, A domain"/>
    <property type="match status" value="1"/>
</dbReference>
<dbReference type="Gene3D" id="3.30.470.20">
    <property type="entry name" value="ATP-grasp fold, B domain"/>
    <property type="match status" value="1"/>
</dbReference>
<dbReference type="Gene3D" id="3.40.50.170">
    <property type="entry name" value="Formyl transferase, N-terminal domain"/>
    <property type="match status" value="1"/>
</dbReference>
<dbReference type="Gene3D" id="3.90.600.10">
    <property type="entry name" value="Phosphoribosylglycinamide synthetase, C-terminal domain"/>
    <property type="match status" value="1"/>
</dbReference>
<dbReference type="Gene3D" id="3.90.650.10">
    <property type="entry name" value="PurM-like C-terminal domain"/>
    <property type="match status" value="1"/>
</dbReference>
<dbReference type="Gene3D" id="3.30.1330.10">
    <property type="entry name" value="PurM-like, N-terminal domain"/>
    <property type="match status" value="1"/>
</dbReference>
<dbReference type="HAMAP" id="MF_00741">
    <property type="entry name" value="AIRS"/>
    <property type="match status" value="1"/>
</dbReference>
<dbReference type="HAMAP" id="MF_00138">
    <property type="entry name" value="GARS"/>
    <property type="match status" value="1"/>
</dbReference>
<dbReference type="HAMAP" id="MF_01930">
    <property type="entry name" value="PurN"/>
    <property type="match status" value="1"/>
</dbReference>
<dbReference type="InterPro" id="IPR011761">
    <property type="entry name" value="ATP-grasp"/>
</dbReference>
<dbReference type="InterPro" id="IPR013815">
    <property type="entry name" value="ATP_grasp_subdomain_1"/>
</dbReference>
<dbReference type="InterPro" id="IPR002376">
    <property type="entry name" value="Formyl_transf_N"/>
</dbReference>
<dbReference type="InterPro" id="IPR036477">
    <property type="entry name" value="Formyl_transf_N_sf"/>
</dbReference>
<dbReference type="InterPro" id="IPR004607">
    <property type="entry name" value="GART"/>
</dbReference>
<dbReference type="InterPro" id="IPR001555">
    <property type="entry name" value="GART_AS"/>
</dbReference>
<dbReference type="InterPro" id="IPR016185">
    <property type="entry name" value="PreATP-grasp_dom_sf"/>
</dbReference>
<dbReference type="InterPro" id="IPR020561">
    <property type="entry name" value="PRibGlycinamid_synth_ATP-grasp"/>
</dbReference>
<dbReference type="InterPro" id="IPR000115">
    <property type="entry name" value="PRibGlycinamide_synth"/>
</dbReference>
<dbReference type="InterPro" id="IPR020560">
    <property type="entry name" value="PRibGlycinamide_synth_C-dom"/>
</dbReference>
<dbReference type="InterPro" id="IPR037123">
    <property type="entry name" value="PRibGlycinamide_synth_C_sf"/>
</dbReference>
<dbReference type="InterPro" id="IPR020559">
    <property type="entry name" value="PRibGlycinamide_synth_CS"/>
</dbReference>
<dbReference type="InterPro" id="IPR020562">
    <property type="entry name" value="PRibGlycinamide_synth_N"/>
</dbReference>
<dbReference type="InterPro" id="IPR010918">
    <property type="entry name" value="PurM-like_C_dom"/>
</dbReference>
<dbReference type="InterPro" id="IPR036676">
    <property type="entry name" value="PurM-like_C_sf"/>
</dbReference>
<dbReference type="InterPro" id="IPR016188">
    <property type="entry name" value="PurM-like_N"/>
</dbReference>
<dbReference type="InterPro" id="IPR036921">
    <property type="entry name" value="PurM-like_N_sf"/>
</dbReference>
<dbReference type="InterPro" id="IPR004733">
    <property type="entry name" value="PurM_cligase"/>
</dbReference>
<dbReference type="InterPro" id="IPR011054">
    <property type="entry name" value="Rudment_hybrid_motif"/>
</dbReference>
<dbReference type="NCBIfam" id="TIGR00877">
    <property type="entry name" value="purD"/>
    <property type="match status" value="1"/>
</dbReference>
<dbReference type="NCBIfam" id="TIGR00878">
    <property type="entry name" value="purM"/>
    <property type="match status" value="1"/>
</dbReference>
<dbReference type="NCBIfam" id="TIGR00639">
    <property type="entry name" value="PurN"/>
    <property type="match status" value="1"/>
</dbReference>
<dbReference type="PANTHER" id="PTHR10520:SF12">
    <property type="entry name" value="TRIFUNCTIONAL PURINE BIOSYNTHETIC PROTEIN ADENOSINE-3"/>
    <property type="match status" value="1"/>
</dbReference>
<dbReference type="PANTHER" id="PTHR10520">
    <property type="entry name" value="TRIFUNCTIONAL PURINE BIOSYNTHETIC PROTEIN ADENOSINE-3-RELATED"/>
    <property type="match status" value="1"/>
</dbReference>
<dbReference type="Pfam" id="PF00586">
    <property type="entry name" value="AIRS"/>
    <property type="match status" value="1"/>
</dbReference>
<dbReference type="Pfam" id="PF02769">
    <property type="entry name" value="AIRS_C"/>
    <property type="match status" value="1"/>
</dbReference>
<dbReference type="Pfam" id="PF00551">
    <property type="entry name" value="Formyl_trans_N"/>
    <property type="match status" value="1"/>
</dbReference>
<dbReference type="Pfam" id="PF01071">
    <property type="entry name" value="GARS_A"/>
    <property type="match status" value="1"/>
</dbReference>
<dbReference type="Pfam" id="PF02843">
    <property type="entry name" value="GARS_C"/>
    <property type="match status" value="1"/>
</dbReference>
<dbReference type="Pfam" id="PF02844">
    <property type="entry name" value="GARS_N"/>
    <property type="match status" value="1"/>
</dbReference>
<dbReference type="SMART" id="SM01209">
    <property type="entry name" value="GARS_A"/>
    <property type="match status" value="1"/>
</dbReference>
<dbReference type="SMART" id="SM01210">
    <property type="entry name" value="GARS_C"/>
    <property type="match status" value="1"/>
</dbReference>
<dbReference type="SUPFAM" id="SSF53328">
    <property type="entry name" value="Formyltransferase"/>
    <property type="match status" value="1"/>
</dbReference>
<dbReference type="SUPFAM" id="SSF56059">
    <property type="entry name" value="Glutathione synthetase ATP-binding domain-like"/>
    <property type="match status" value="1"/>
</dbReference>
<dbReference type="SUPFAM" id="SSF52440">
    <property type="entry name" value="PreATP-grasp domain"/>
    <property type="match status" value="1"/>
</dbReference>
<dbReference type="SUPFAM" id="SSF56042">
    <property type="entry name" value="PurM C-terminal domain-like"/>
    <property type="match status" value="1"/>
</dbReference>
<dbReference type="SUPFAM" id="SSF55326">
    <property type="entry name" value="PurM N-terminal domain-like"/>
    <property type="match status" value="1"/>
</dbReference>
<dbReference type="SUPFAM" id="SSF51246">
    <property type="entry name" value="Rudiment single hybrid motif"/>
    <property type="match status" value="1"/>
</dbReference>
<dbReference type="PROSITE" id="PS50975">
    <property type="entry name" value="ATP_GRASP"/>
    <property type="match status" value="1"/>
</dbReference>
<dbReference type="PROSITE" id="PS00184">
    <property type="entry name" value="GARS"/>
    <property type="match status" value="1"/>
</dbReference>
<dbReference type="PROSITE" id="PS00373">
    <property type="entry name" value="GART"/>
    <property type="match status" value="1"/>
</dbReference>
<keyword id="KW-0002">3D-structure</keyword>
<keyword id="KW-0007">Acetylation</keyword>
<keyword id="KW-0025">Alternative splicing</keyword>
<keyword id="KW-0067">ATP-binding</keyword>
<keyword id="KW-0436">Ligase</keyword>
<keyword id="KW-0460">Magnesium</keyword>
<keyword id="KW-0464">Manganese</keyword>
<keyword id="KW-0479">Metal-binding</keyword>
<keyword id="KW-0511">Multifunctional enzyme</keyword>
<keyword id="KW-0547">Nucleotide-binding</keyword>
<keyword id="KW-0597">Phosphoprotein</keyword>
<keyword id="KW-1267">Proteomics identification</keyword>
<keyword id="KW-0658">Purine biosynthesis</keyword>
<keyword id="KW-1185">Reference proteome</keyword>
<keyword id="KW-0808">Transferase</keyword>
<sequence length="1010" mass="107767">MAARVLIIGSGGREHTLAWKLAQSHHVKQVLVAPGNAGTACSEKISNTAISISDHTALAQFCKEKKIEFVVVGPEAPLAAGIVGNLRSAGVQCFGPTAEAAQLESSKRFAKEFMDRHGIPTAQWKAFTKPEEACSFILSADFPALVVKASGLAAGKGVIVAKSKEEACKAVQEIMQEKAFGAAGETIVIEELLDGEEVSCLCFTDGKTVAPMPPAQDHKRLLEGDGGPNTGGMGAYCPAPQVSNDLLLKIKDTVLQRTVDGMQQEGTPYTGILYAGIMLTKNGPKVLEFNCRFGDPECQVILPLLKSDLYEVIQSTLDGLLCTSLPVWLENHTALTVVMASKGYPGDYTKGVEITGFPEAQALGLEVFHAGTALKNGKVVTHGGRVLAVTAIRENLISALEEAKKGLAAIKFEGAIYRKDVGFRAIAFLQQPRSLTYKESGVDIAAGNMLVKKIQPLAKATSRSGCKVDLGGFAGLFDLKAAGFKDPLLASGTDGVGTKLKIAQLCNKHDTIGQDLVAMCVNDILAQGAEPLFFLDYFSCGKLDLSVTEAVVAGIAKACGKAGCALLGGETAEMPDMYPPGEYDLAGFAVGAMERDQKLPHLERITEGDVVVGIASSGLHSNGFSLVRKIVAKSSLQYSSPAPDGCGDQTLGDLLLTPTRIYSHSLLPVLRSGHVKAFAHITGGGLLENIPRVLPEKLGVDLDAQTWRIPRVFSWLQQEGHLSEEEMARTFNCGVGAVLVVSKEQTEQILRDIQQHKEEAWVIGSVVARAEGSPRVKVKNLIESMQINGSVLKNGSLTNHFSFEKKKARVAVLISGTGSNLQALIDSTREPNSSAQIDIVISNKAAVAGLDKAERAGIPTRVINHKLYKNRVEFDSAIDLVLEEFSIDIVCLAGFMRILSGPFVQKWNGKMLNIHPSLLPSFKGSNAHEQALETGVTVTGCTVHFVAEDVDAGQIILQEAVPVKRGDTVATLSERVKLAEHKIFPAALQLVASGTVQLGENGKICWVKEE</sequence>
<protein>
    <recommendedName>
        <fullName evidence="19">Trifunctional purine biosynthetic protein adenosine-3</fullName>
    </recommendedName>
    <domain>
        <recommendedName>
            <fullName evidence="19">Phosphoribosylamine--glycine ligase</fullName>
            <ecNumber evidence="18 19">6.3.4.13</ecNumber>
        </recommendedName>
        <alternativeName>
            <fullName>Glycinamide ribonucleotide synthetase</fullName>
            <shortName evidence="13">GARS</shortName>
        </alternativeName>
        <alternativeName>
            <fullName evidence="13">Phosphoribosylglycinamide synthetase</fullName>
        </alternativeName>
    </domain>
    <domain>
        <recommendedName>
            <fullName evidence="19">Phosphoribosylformylglycinamidine cyclo-ligase</fullName>
            <ecNumber evidence="18 19">6.3.3.1</ecNumber>
        </recommendedName>
        <alternativeName>
            <fullName>AIR synthase</fullName>
            <shortName evidence="13">AIRS</shortName>
        </alternativeName>
        <alternativeName>
            <fullName>Phosphoribosyl-aminoimidazole synthetase</fullName>
        </alternativeName>
    </domain>
    <domain>
        <recommendedName>
            <fullName evidence="13">Phosphoribosylglycinamide formyltransferase</fullName>
            <ecNumber evidence="5 6 18 19">2.1.2.2</ecNumber>
        </recommendedName>
        <alternativeName>
            <fullName>5'-phosphoribosylglycinamide transformylase</fullName>
        </alternativeName>
        <alternativeName>
            <fullName evidence="11">GAR transformylase</fullName>
            <shortName evidence="13">GART</shortName>
        </alternativeName>
    </domain>
</protein>
<proteinExistence type="evidence at protein level"/>
<organism>
    <name type="scientific">Homo sapiens</name>
    <name type="common">Human</name>
    <dbReference type="NCBI Taxonomy" id="9606"/>
    <lineage>
        <taxon>Eukaryota</taxon>
        <taxon>Metazoa</taxon>
        <taxon>Chordata</taxon>
        <taxon>Craniata</taxon>
        <taxon>Vertebrata</taxon>
        <taxon>Euteleostomi</taxon>
        <taxon>Mammalia</taxon>
        <taxon>Eutheria</taxon>
        <taxon>Euarchontoglires</taxon>
        <taxon>Primates</taxon>
        <taxon>Haplorrhini</taxon>
        <taxon>Catarrhini</taxon>
        <taxon>Hominidae</taxon>
        <taxon>Homo</taxon>
    </lineage>
</organism>
<name>PUR2_HUMAN</name>
<gene>
    <name type="primary">GART</name>
    <name type="synonym">PGFT</name>
    <name type="synonym">PRGS</name>
</gene>
<comment type="function">
    <text evidence="15 16 18 19">Trifunctional enzyme that catalyzes three distinct reactions as part of the 'de novo' inosine monophosphate biosynthetic pathway.</text>
</comment>
<comment type="catalytic activity">
    <reaction evidence="18 19">
        <text>5-phospho-beta-D-ribosylamine + glycine + ATP = N(1)-(5-phospho-beta-D-ribosyl)glycinamide + ADP + phosphate + H(+)</text>
        <dbReference type="Rhea" id="RHEA:17453"/>
        <dbReference type="ChEBI" id="CHEBI:15378"/>
        <dbReference type="ChEBI" id="CHEBI:30616"/>
        <dbReference type="ChEBI" id="CHEBI:43474"/>
        <dbReference type="ChEBI" id="CHEBI:57305"/>
        <dbReference type="ChEBI" id="CHEBI:58681"/>
        <dbReference type="ChEBI" id="CHEBI:143788"/>
        <dbReference type="ChEBI" id="CHEBI:456216"/>
        <dbReference type="EC" id="6.3.4.13"/>
    </reaction>
    <physiologicalReaction direction="left-to-right" evidence="19">
        <dbReference type="Rhea" id="RHEA:17454"/>
    </physiologicalReaction>
</comment>
<comment type="catalytic activity">
    <reaction evidence="5 6">
        <text>N(1)-(5-phospho-beta-D-ribosyl)glycinamide + (6R)-10-formyltetrahydrofolate = N(2)-formyl-N(1)-(5-phospho-beta-D-ribosyl)glycinamide + (6S)-5,6,7,8-tetrahydrofolate + H(+)</text>
        <dbReference type="Rhea" id="RHEA:15053"/>
        <dbReference type="ChEBI" id="CHEBI:15378"/>
        <dbReference type="ChEBI" id="CHEBI:57453"/>
        <dbReference type="ChEBI" id="CHEBI:143788"/>
        <dbReference type="ChEBI" id="CHEBI:147286"/>
        <dbReference type="ChEBI" id="CHEBI:195366"/>
        <dbReference type="EC" id="2.1.2.2"/>
    </reaction>
    <physiologicalReaction direction="left-to-right" evidence="15">
        <dbReference type="Rhea" id="RHEA:15054"/>
    </physiologicalReaction>
</comment>
<comment type="catalytic activity">
    <reaction evidence="18 19">
        <text>2-formamido-N(1)-(5-O-phospho-beta-D-ribosyl)acetamidine + ATP = 5-amino-1-(5-phospho-beta-D-ribosyl)imidazole + ADP + phosphate + H(+)</text>
        <dbReference type="Rhea" id="RHEA:23032"/>
        <dbReference type="ChEBI" id="CHEBI:15378"/>
        <dbReference type="ChEBI" id="CHEBI:30616"/>
        <dbReference type="ChEBI" id="CHEBI:43474"/>
        <dbReference type="ChEBI" id="CHEBI:137981"/>
        <dbReference type="ChEBI" id="CHEBI:147287"/>
        <dbReference type="ChEBI" id="CHEBI:456216"/>
        <dbReference type="EC" id="6.3.3.1"/>
    </reaction>
    <physiologicalReaction direction="left-to-right" evidence="19">
        <dbReference type="Rhea" id="RHEA:23033"/>
    </physiologicalReaction>
</comment>
<comment type="cofactor">
    <cofactor evidence="2 4">
        <name>Mg(2+)</name>
        <dbReference type="ChEBI" id="CHEBI:18420"/>
    </cofactor>
    <cofactor evidence="4">
        <name>Mn(2+)</name>
        <dbReference type="ChEBI" id="CHEBI:29035"/>
    </cofactor>
    <text evidence="4">Binds 1 magnesium or manganese ion per subunit.</text>
</comment>
<comment type="pathway">
    <text evidence="15">Purine metabolism; IMP biosynthesis via de novo pathway; 5-amino-1-(5-phospho-D-ribosyl)imidazole from N(2)-formyl-N(1)-(5-phospho-D-ribosyl)glycinamide: step 2/2.</text>
</comment>
<comment type="pathway">
    <text evidence="19">Purine metabolism; IMP biosynthesis via de novo pathway; N(1)-(5-phospho-D-ribosyl)glycinamide from 5-phospho-alpha-D-ribose 1-diphosphate: step 2/2.</text>
</comment>
<comment type="pathway">
    <text evidence="19">Purine metabolism; IMP biosynthesis via de novo pathway; N(2)-formyl-N(1)-(5-phospho-D-ribosyl)glycinamide from N(1)-(5-phospho-D-ribosyl)glycinamide (10-formyl THF route): step 1/1.</text>
</comment>
<comment type="subunit">
    <text evidence="9">Homodimer.</text>
</comment>
<comment type="alternative products">
    <event type="alternative splicing"/>
    <isoform>
        <id>P22102-1</id>
        <name>Long</name>
        <sequence type="displayed"/>
    </isoform>
    <isoform>
        <id>P22102-2</id>
        <name>Short</name>
        <sequence type="described" ref="VSP_005517"/>
    </isoform>
</comment>
<comment type="domain">
    <text evidence="18 19">The N-terminal ATP-grasp domain carries the phosphoribosylamine--glycine ligase activity.</text>
</comment>
<comment type="domain">
    <text evidence="18 19">The central AIRS domain carries the phosphoribosylformylglycinamidine cyclo-ligase activity.</text>
</comment>
<comment type="domain">
    <text evidence="5 6 9">The C-terminal GART domain carries the phosphoribosylglycinamide formyltransferase activity.</text>
</comment>
<comment type="similarity">
    <text evidence="14">In the N-terminal section; belongs to the GARS family.</text>
</comment>
<comment type="similarity">
    <text evidence="14">In the central section; belongs to the AIR synthase family.</text>
</comment>
<comment type="similarity">
    <text evidence="14">In the C-terminal section; belongs to the GART family.</text>
</comment>
<feature type="initiator methionine" description="Removed" evidence="28">
    <location>
        <position position="1"/>
    </location>
</feature>
<feature type="chain" id="PRO_0000074937" description="Trifunctional purine biosynthetic protein adenosine-3">
    <location>
        <begin position="2"/>
        <end position="1010"/>
    </location>
</feature>
<feature type="domain" description="ATP-grasp" evidence="4">
    <location>
        <begin position="111"/>
        <end position="318"/>
    </location>
</feature>
<feature type="region of interest" description="AIRS domain" evidence="3">
    <location>
        <begin position="434"/>
        <end position="809"/>
    </location>
</feature>
<feature type="region of interest" description="GART domain" evidence="5 6 21 23">
    <location>
        <begin position="810"/>
        <end position="1010"/>
    </location>
</feature>
<feature type="active site" description="Proton donor" evidence="1">
    <location>
        <position position="915"/>
    </location>
</feature>
<feature type="binding site" evidence="9 26">
    <location>
        <begin position="190"/>
        <end position="193"/>
    </location>
    <ligand>
        <name>ATP</name>
        <dbReference type="ChEBI" id="CHEBI:30616"/>
    </ligand>
</feature>
<feature type="binding site" evidence="9 26">
    <location>
        <position position="197"/>
    </location>
    <ligand>
        <name>ATP</name>
        <dbReference type="ChEBI" id="CHEBI:30616"/>
    </ligand>
</feature>
<feature type="binding site" evidence="9 26">
    <location>
        <position position="220"/>
    </location>
    <ligand>
        <name>ATP</name>
        <dbReference type="ChEBI" id="CHEBI:30616"/>
    </ligand>
</feature>
<feature type="binding site" evidence="9 26">
    <location>
        <position position="229"/>
    </location>
    <ligand>
        <name>ATP</name>
        <dbReference type="ChEBI" id="CHEBI:30616"/>
    </ligand>
</feature>
<feature type="binding site" evidence="4">
    <location>
        <position position="288"/>
    </location>
    <ligand>
        <name>Mg(2+)</name>
        <dbReference type="ChEBI" id="CHEBI:18420"/>
    </ligand>
</feature>
<feature type="binding site" evidence="4">
    <location>
        <position position="290"/>
    </location>
    <ligand>
        <name>Mg(2+)</name>
        <dbReference type="ChEBI" id="CHEBI:18420"/>
    </ligand>
</feature>
<feature type="binding site" evidence="5 8 21 25">
    <location>
        <begin position="818"/>
        <end position="820"/>
    </location>
    <ligand>
        <name>N(1)-(5-phospho-beta-D-ribosyl)glycinamide</name>
        <dbReference type="ChEBI" id="CHEBI:143788"/>
    </ligand>
</feature>
<feature type="binding site" evidence="16 23">
    <location>
        <position position="871"/>
    </location>
    <ligand>
        <name>(6R)-10-formyltetrahydrofolate</name>
        <dbReference type="ChEBI" id="CHEBI:195366"/>
    </ligand>
</feature>
<feature type="binding site" evidence="16 17 23 25">
    <location>
        <begin position="896"/>
        <end position="899"/>
    </location>
    <ligand>
        <name>(6R)-10-formyltetrahydrofolate</name>
        <dbReference type="ChEBI" id="CHEBI:195366"/>
    </ligand>
</feature>
<feature type="binding site" evidence="16 23">
    <location>
        <position position="913"/>
    </location>
    <ligand>
        <name>(6R)-10-formyltetrahydrofolate</name>
        <dbReference type="ChEBI" id="CHEBI:195366"/>
    </ligand>
</feature>
<feature type="binding site" evidence="16 17 23 25">
    <location>
        <begin position="947"/>
        <end position="951"/>
    </location>
    <ligand>
        <name>(6R)-10-formyltetrahydrofolate</name>
        <dbReference type="ChEBI" id="CHEBI:195366"/>
    </ligand>
</feature>
<feature type="binding site" evidence="5 8 21 25">
    <location>
        <begin position="977"/>
        <end position="980"/>
    </location>
    <ligand>
        <name>N(1)-(5-phospho-beta-D-ribosyl)glycinamide</name>
        <dbReference type="ChEBI" id="CHEBI:143788"/>
    </ligand>
</feature>
<feature type="site" description="Raises pKa of active site His" evidence="1">
    <location>
        <position position="951"/>
    </location>
</feature>
<feature type="modified residue" description="N-acetylalanine" evidence="28">
    <location>
        <position position="2"/>
    </location>
</feature>
<feature type="modified residue" description="Phosphoserine" evidence="30">
    <location>
        <position position="10"/>
    </location>
</feature>
<feature type="modified residue" description="N6-acetyllysine" evidence="29">
    <location>
        <position position="350"/>
    </location>
</feature>
<feature type="modified residue" description="Phosphoserine" evidence="30">
    <location>
        <position position="440"/>
    </location>
</feature>
<feature type="modified residue" description="Phosphothreonine" evidence="30">
    <location>
        <position position="682"/>
    </location>
</feature>
<feature type="modified residue" description="Phosphoserine" evidence="30">
    <location>
        <position position="796"/>
    </location>
</feature>
<feature type="modified residue" description="Phosphoserine" evidence="30">
    <location>
        <position position="802"/>
    </location>
</feature>
<feature type="splice variant" id="VSP_005517" description="In isoform Short." evidence="12">
    <location>
        <begin position="434"/>
        <end position="1010"/>
    </location>
</feature>
<feature type="sequence variant" id="VAR_011817" description="In dbSNP:rs1804387.">
    <original>L</original>
    <variation>F</variation>
    <location>
        <position position="21"/>
    </location>
</feature>
<feature type="sequence variant" id="VAR_011818" description="In dbSNP:rs8788." evidence="7 10">
    <original>V</original>
    <variation>I</variation>
    <location>
        <position position="421"/>
    </location>
</feature>
<feature type="sequence variant" id="VAR_051882" description="In dbSNP:rs35927582.">
    <original>D</original>
    <variation>G</variation>
    <location>
        <position position="510"/>
    </location>
</feature>
<feature type="sequence variant" id="VAR_051883" description="In dbSNP:rs34588874.">
    <original>P</original>
    <variation>A</variation>
    <location>
        <position position="641"/>
    </location>
</feature>
<feature type="sequence variant" id="VAR_011819" description="In dbSNP:rs8971.">
    <original>D</original>
    <variation>G</variation>
    <location>
        <position position="752"/>
    </location>
</feature>
<feature type="strand" evidence="31">
    <location>
        <begin position="2"/>
        <end position="9"/>
    </location>
</feature>
<feature type="helix" evidence="31">
    <location>
        <begin position="12"/>
        <end position="21"/>
    </location>
</feature>
<feature type="strand" evidence="31">
    <location>
        <begin position="27"/>
        <end position="34"/>
    </location>
</feature>
<feature type="helix" evidence="31">
    <location>
        <begin position="37"/>
        <end position="39"/>
    </location>
</feature>
<feature type="strand" evidence="31">
    <location>
        <begin position="40"/>
        <end position="47"/>
    </location>
</feature>
<feature type="helix" evidence="31">
    <location>
        <begin position="55"/>
        <end position="65"/>
    </location>
</feature>
<feature type="strand" evidence="31">
    <location>
        <begin position="69"/>
        <end position="72"/>
    </location>
</feature>
<feature type="helix" evidence="31">
    <location>
        <begin position="76"/>
        <end position="79"/>
    </location>
</feature>
<feature type="helix" evidence="31">
    <location>
        <begin position="82"/>
        <end position="88"/>
    </location>
</feature>
<feature type="strand" evidence="31">
    <location>
        <begin position="93"/>
        <end position="95"/>
    </location>
</feature>
<feature type="turn" evidence="31">
    <location>
        <begin position="98"/>
        <end position="101"/>
    </location>
</feature>
<feature type="helix" evidence="31">
    <location>
        <begin position="102"/>
        <end position="105"/>
    </location>
</feature>
<feature type="helix" evidence="31">
    <location>
        <begin position="107"/>
        <end position="116"/>
    </location>
</feature>
<feature type="strand" evidence="31">
    <location>
        <begin position="124"/>
        <end position="129"/>
    </location>
</feature>
<feature type="helix" evidence="31">
    <location>
        <begin position="130"/>
        <end position="139"/>
    </location>
</feature>
<feature type="strand" evidence="31">
    <location>
        <begin position="144"/>
        <end position="151"/>
    </location>
</feature>
<feature type="strand" evidence="31">
    <location>
        <begin position="158"/>
        <end position="160"/>
    </location>
</feature>
<feature type="helix" evidence="31">
    <location>
        <begin position="164"/>
        <end position="174"/>
    </location>
</feature>
<feature type="strand" evidence="31">
    <location>
        <begin position="187"/>
        <end position="191"/>
    </location>
</feature>
<feature type="strand" evidence="31">
    <location>
        <begin position="195"/>
        <end position="204"/>
    </location>
</feature>
<feature type="strand" evidence="31">
    <location>
        <begin position="209"/>
        <end position="211"/>
    </location>
</feature>
<feature type="strand" evidence="31">
    <location>
        <begin position="215"/>
        <end position="222"/>
    </location>
</feature>
<feature type="turn" evidence="31">
    <location>
        <begin position="223"/>
        <end position="225"/>
    </location>
</feature>
<feature type="strand" evidence="31">
    <location>
        <begin position="226"/>
        <end position="238"/>
    </location>
</feature>
<feature type="helix" evidence="31">
    <location>
        <begin position="244"/>
        <end position="253"/>
    </location>
</feature>
<feature type="helix" evidence="31">
    <location>
        <begin position="255"/>
        <end position="264"/>
    </location>
</feature>
<feature type="strand" evidence="31">
    <location>
        <begin position="271"/>
        <end position="280"/>
    </location>
</feature>
<feature type="strand" evidence="31">
    <location>
        <begin position="283"/>
        <end position="292"/>
    </location>
</feature>
<feature type="turn" evidence="31">
    <location>
        <begin position="295"/>
        <end position="297"/>
    </location>
</feature>
<feature type="helix" evidence="31">
    <location>
        <begin position="298"/>
        <end position="301"/>
    </location>
</feature>
<feature type="helix" evidence="31">
    <location>
        <begin position="302"/>
        <end position="304"/>
    </location>
</feature>
<feature type="helix" evidence="31">
    <location>
        <begin position="309"/>
        <end position="317"/>
    </location>
</feature>
<feature type="helix" evidence="31">
    <location>
        <begin position="321"/>
        <end position="324"/>
    </location>
</feature>
<feature type="strand" evidence="31">
    <location>
        <begin position="333"/>
        <end position="340"/>
    </location>
</feature>
<feature type="turn" evidence="31">
    <location>
        <begin position="342"/>
        <end position="345"/>
    </location>
</feature>
<feature type="helix" evidence="31">
    <location>
        <begin position="357"/>
        <end position="362"/>
    </location>
</feature>
<feature type="strand" evidence="31">
    <location>
        <begin position="366"/>
        <end position="375"/>
    </location>
</feature>
<feature type="strand" evidence="31">
    <location>
        <begin position="378"/>
        <end position="381"/>
    </location>
</feature>
<feature type="strand" evidence="31">
    <location>
        <begin position="383"/>
        <end position="395"/>
    </location>
</feature>
<feature type="helix" evidence="31">
    <location>
        <begin position="396"/>
        <end position="409"/>
    </location>
</feature>
<feature type="helix" evidence="31">
    <location>
        <begin position="423"/>
        <end position="428"/>
    </location>
</feature>
<feature type="turn" evidence="32">
    <location>
        <begin position="479"/>
        <end position="483"/>
    </location>
</feature>
<feature type="strand" evidence="32">
    <location>
        <begin position="485"/>
        <end position="494"/>
    </location>
</feature>
<feature type="helix" evidence="32">
    <location>
        <begin position="499"/>
        <end position="506"/>
    </location>
</feature>
<feature type="helix" evidence="32">
    <location>
        <begin position="512"/>
        <end position="525"/>
    </location>
</feature>
<feature type="turn" evidence="32">
    <location>
        <begin position="526"/>
        <end position="528"/>
    </location>
</feature>
<feature type="strand" evidence="32">
    <location>
        <begin position="530"/>
        <end position="542"/>
    </location>
</feature>
<feature type="helix" evidence="32">
    <location>
        <begin position="545"/>
        <end position="562"/>
    </location>
</feature>
<feature type="strand" evidence="32">
    <location>
        <begin position="565"/>
        <end position="573"/>
    </location>
</feature>
<feature type="turn" evidence="32">
    <location>
        <begin position="575"/>
        <end position="577"/>
    </location>
</feature>
<feature type="strand" evidence="32">
    <location>
        <begin position="583"/>
        <end position="594"/>
    </location>
</feature>
<feature type="helix" evidence="32">
    <location>
        <begin position="595"/>
        <end position="597"/>
    </location>
</feature>
<feature type="helix" evidence="32">
    <location>
        <begin position="602"/>
        <end position="604"/>
    </location>
</feature>
<feature type="strand" evidence="32">
    <location>
        <begin position="610"/>
        <end position="615"/>
    </location>
</feature>
<feature type="strand" evidence="32">
    <location>
        <begin position="617"/>
        <end position="619"/>
    </location>
</feature>
<feature type="helix" evidence="32">
    <location>
        <begin position="624"/>
        <end position="633"/>
    </location>
</feature>
<feature type="strand" evidence="32">
    <location>
        <begin position="648"/>
        <end position="650"/>
    </location>
</feature>
<feature type="helix" evidence="32">
    <location>
        <begin position="651"/>
        <end position="655"/>
    </location>
</feature>
<feature type="helix" evidence="32">
    <location>
        <begin position="663"/>
        <end position="671"/>
    </location>
</feature>
<feature type="strand" evidence="32">
    <location>
        <begin position="677"/>
        <end position="680"/>
    </location>
</feature>
<feature type="helix" evidence="32">
    <location>
        <begin position="685"/>
        <end position="689"/>
    </location>
</feature>
<feature type="helix" evidence="32">
    <location>
        <begin position="691"/>
        <end position="693"/>
    </location>
</feature>
<feature type="strand" evidence="32">
    <location>
        <begin position="698"/>
        <end position="703"/>
    </location>
</feature>
<feature type="helix" evidence="32">
    <location>
        <begin position="704"/>
        <end position="706"/>
    </location>
</feature>
<feature type="helix" evidence="32">
    <location>
        <begin position="711"/>
        <end position="720"/>
    </location>
</feature>
<feature type="helix" evidence="32">
    <location>
        <begin position="724"/>
        <end position="730"/>
    </location>
</feature>
<feature type="strand" evidence="32">
    <location>
        <begin position="735"/>
        <end position="741"/>
    </location>
</feature>
<feature type="helix" evidence="32">
    <location>
        <begin position="743"/>
        <end position="745"/>
    </location>
</feature>
<feature type="helix" evidence="32">
    <location>
        <begin position="746"/>
        <end position="755"/>
    </location>
</feature>
<feature type="strand" evidence="32">
    <location>
        <begin position="760"/>
        <end position="768"/>
    </location>
</feature>
<feature type="strand" evidence="32">
    <location>
        <begin position="776"/>
        <end position="779"/>
    </location>
</feature>
<feature type="helix" evidence="32">
    <location>
        <begin position="781"/>
        <end position="785"/>
    </location>
</feature>
<feature type="strand" evidence="33">
    <location>
        <begin position="809"/>
        <end position="816"/>
    </location>
</feature>
<feature type="helix" evidence="33">
    <location>
        <begin position="819"/>
        <end position="828"/>
    </location>
</feature>
<feature type="strand" evidence="33">
    <location>
        <begin position="836"/>
        <end position="844"/>
    </location>
</feature>
<feature type="helix" evidence="33">
    <location>
        <begin position="848"/>
        <end position="855"/>
    </location>
</feature>
<feature type="strand" evidence="33">
    <location>
        <begin position="860"/>
        <end position="862"/>
    </location>
</feature>
<feature type="helix" evidence="33">
    <location>
        <begin position="865"/>
        <end position="867"/>
    </location>
</feature>
<feature type="strand" evidence="33">
    <location>
        <begin position="868"/>
        <end position="870"/>
    </location>
</feature>
<feature type="helix" evidence="33">
    <location>
        <begin position="871"/>
        <end position="884"/>
    </location>
</feature>
<feature type="strand" evidence="33">
    <location>
        <begin position="888"/>
        <end position="894"/>
    </location>
</feature>
<feature type="helix" evidence="33">
    <location>
        <begin position="901"/>
        <end position="906"/>
    </location>
</feature>
<feature type="turn" evidence="33">
    <location>
        <begin position="907"/>
        <end position="909"/>
    </location>
</feature>
<feature type="strand" evidence="33">
    <location>
        <begin position="910"/>
        <end position="917"/>
    </location>
</feature>
<feature type="turn" evidence="33">
    <location>
        <begin position="919"/>
        <end position="922"/>
    </location>
</feature>
<feature type="helix" evidence="33">
    <location>
        <begin position="927"/>
        <end position="934"/>
    </location>
</feature>
<feature type="strand" evidence="33">
    <location>
        <begin position="937"/>
        <end position="945"/>
    </location>
</feature>
<feature type="strand" evidence="33">
    <location>
        <begin position="955"/>
        <end position="962"/>
    </location>
</feature>
<feature type="helix" evidence="33">
    <location>
        <begin position="969"/>
        <end position="992"/>
    </location>
</feature>
<feature type="strand" evidence="33">
    <location>
        <begin position="995"/>
        <end position="998"/>
    </location>
</feature>
<feature type="strand" evidence="33">
    <location>
        <begin position="1002"/>
        <end position="1006"/>
    </location>
</feature>
<evidence type="ECO:0000250" key="1">
    <source>
        <dbReference type="UniProtKB" id="P08179"/>
    </source>
</evidence>
<evidence type="ECO:0000250" key="2">
    <source>
        <dbReference type="UniProtKB" id="P15640"/>
    </source>
</evidence>
<evidence type="ECO:0000250" key="3">
    <source>
        <dbReference type="UniProtKB" id="P21872"/>
    </source>
</evidence>
<evidence type="ECO:0000255" key="4">
    <source>
        <dbReference type="PROSITE-ProRule" id="PRU00409"/>
    </source>
</evidence>
<evidence type="ECO:0000269" key="5">
    <source>
    </source>
</evidence>
<evidence type="ECO:0000269" key="6">
    <source>
    </source>
</evidence>
<evidence type="ECO:0000269" key="7">
    <source>
    </source>
</evidence>
<evidence type="ECO:0000269" key="8">
    <source>
    </source>
</evidence>
<evidence type="ECO:0000269" key="9">
    <source>
    </source>
</evidence>
<evidence type="ECO:0000269" key="10">
    <source>
    </source>
</evidence>
<evidence type="ECO:0000303" key="11">
    <source>
    </source>
</evidence>
<evidence type="ECO:0000303" key="12">
    <source>
    </source>
</evidence>
<evidence type="ECO:0000303" key="13">
    <source>
    </source>
</evidence>
<evidence type="ECO:0000305" key="14"/>
<evidence type="ECO:0000305" key="15">
    <source>
    </source>
</evidence>
<evidence type="ECO:0000305" key="16">
    <source>
    </source>
</evidence>
<evidence type="ECO:0000305" key="17">
    <source>
    </source>
</evidence>
<evidence type="ECO:0000305" key="18">
    <source>
    </source>
</evidence>
<evidence type="ECO:0000305" key="19">
    <source>
    </source>
</evidence>
<evidence type="ECO:0007744" key="20">
    <source>
        <dbReference type="PDB" id="1MEJ"/>
    </source>
</evidence>
<evidence type="ECO:0007744" key="21">
    <source>
        <dbReference type="PDB" id="1MEN"/>
    </source>
</evidence>
<evidence type="ECO:0007744" key="22">
    <source>
        <dbReference type="PDB" id="1MEO"/>
    </source>
</evidence>
<evidence type="ECO:0007744" key="23">
    <source>
        <dbReference type="PDB" id="1NJS"/>
    </source>
</evidence>
<evidence type="ECO:0007744" key="24">
    <source>
        <dbReference type="PDB" id="1ZLX"/>
    </source>
</evidence>
<evidence type="ECO:0007744" key="25">
    <source>
        <dbReference type="PDB" id="1ZLY"/>
    </source>
</evidence>
<evidence type="ECO:0007744" key="26">
    <source>
        <dbReference type="PDB" id="2QK4"/>
    </source>
</evidence>
<evidence type="ECO:0007744" key="27">
    <source>
        <dbReference type="PDB" id="2V9Y"/>
    </source>
</evidence>
<evidence type="ECO:0007744" key="28">
    <source>
    </source>
</evidence>
<evidence type="ECO:0007744" key="29">
    <source>
    </source>
</evidence>
<evidence type="ECO:0007744" key="30">
    <source>
    </source>
</evidence>
<evidence type="ECO:0007829" key="31">
    <source>
        <dbReference type="PDB" id="2QK4"/>
    </source>
</evidence>
<evidence type="ECO:0007829" key="32">
    <source>
        <dbReference type="PDB" id="2V9Y"/>
    </source>
</evidence>
<evidence type="ECO:0007829" key="33">
    <source>
        <dbReference type="PDB" id="4ZZ1"/>
    </source>
</evidence>
<accession>P22102</accession>
<accession>A8K945</accession>
<accession>A8KA32</accession>
<accession>D3DSF3</accession>
<accession>D3DSF4</accession>
<accession>O14659</accession>
<accession>Q52M77</accession>